<feature type="chain" id="PRO_0000259859" description="Sugar transporter ERD6-like 9">
    <location>
        <begin position="1"/>
        <end position="327"/>
    </location>
</feature>
<feature type="transmembrane region" description="Helical" evidence="2">
    <location>
        <begin position="26"/>
        <end position="46"/>
    </location>
</feature>
<feature type="transmembrane region" description="Helical" evidence="2">
    <location>
        <begin position="68"/>
        <end position="88"/>
    </location>
</feature>
<feature type="transmembrane region" description="Helical" evidence="2">
    <location>
        <begin position="102"/>
        <end position="122"/>
    </location>
</feature>
<feature type="transmembrane region" description="Helical" evidence="2">
    <location>
        <begin position="125"/>
        <end position="145"/>
    </location>
</feature>
<feature type="transmembrane region" description="Helical" evidence="2">
    <location>
        <begin position="152"/>
        <end position="172"/>
    </location>
</feature>
<feature type="transmembrane region" description="Helical" evidence="2">
    <location>
        <begin position="180"/>
        <end position="200"/>
    </location>
</feature>
<feature type="transmembrane region" description="Helical" evidence="2">
    <location>
        <begin position="260"/>
        <end position="280"/>
    </location>
</feature>
<feature type="transmembrane region" description="Helical" evidence="2">
    <location>
        <begin position="295"/>
        <end position="315"/>
    </location>
</feature>
<name>ERDL9_ARATH</name>
<gene>
    <name type="ordered locus">At3g05155</name>
    <name type="ORF">T12H1.36</name>
</gene>
<sequence length="327" mass="35713">MEGENSSIEKGLLLIRKEESANTTPFLVFTTFIIVSASFSFGVALGHTAGTMASIMEDLDLSITQFSVFGSLLTFGGMIGALFSATIADSFGCKMTLWITEVFCISGWLAIALAKNIIWLDLGRFFVGIGVGLLSYVVPVYIAEITPKTVRGTFTFSNQLLQNCGVATAYYLGNFMSWRIIALIGILPCLIQLVGLFFVPESPRWLAKEGRDEECEVVLQKLRGDEADIVKETQEILISVEASANISMRSLFKKKYTHQLTIGIGLMLLQQLSGSAGLGYYTGSVFDLAGFPSRIGMTVLSIVVVPKAILGLILVERWGRRPLLMVM</sequence>
<evidence type="ECO:0000250" key="1"/>
<evidence type="ECO:0000255" key="2"/>
<evidence type="ECO:0000305" key="3"/>
<proteinExistence type="evidence at transcript level"/>
<organism>
    <name type="scientific">Arabidopsis thaliana</name>
    <name type="common">Mouse-ear cress</name>
    <dbReference type="NCBI Taxonomy" id="3702"/>
    <lineage>
        <taxon>Eukaryota</taxon>
        <taxon>Viridiplantae</taxon>
        <taxon>Streptophyta</taxon>
        <taxon>Embryophyta</taxon>
        <taxon>Tracheophyta</taxon>
        <taxon>Spermatophyta</taxon>
        <taxon>Magnoliopsida</taxon>
        <taxon>eudicotyledons</taxon>
        <taxon>Gunneridae</taxon>
        <taxon>Pentapetalae</taxon>
        <taxon>rosids</taxon>
        <taxon>malvids</taxon>
        <taxon>Brassicales</taxon>
        <taxon>Brassicaceae</taxon>
        <taxon>Camelineae</taxon>
        <taxon>Arabidopsis</taxon>
    </lineage>
</organism>
<accession>Q7XA64</accession>
<reference key="1">
    <citation type="journal article" date="2000" name="Nature">
        <title>Sequence and analysis of chromosome 3 of the plant Arabidopsis thaliana.</title>
        <authorList>
            <person name="Salanoubat M."/>
            <person name="Lemcke K."/>
            <person name="Rieger M."/>
            <person name="Ansorge W."/>
            <person name="Unseld M."/>
            <person name="Fartmann B."/>
            <person name="Valle G."/>
            <person name="Bloecker H."/>
            <person name="Perez-Alonso M."/>
            <person name="Obermaier B."/>
            <person name="Delseny M."/>
            <person name="Boutry M."/>
            <person name="Grivell L.A."/>
            <person name="Mache R."/>
            <person name="Puigdomenech P."/>
            <person name="De Simone V."/>
            <person name="Choisne N."/>
            <person name="Artiguenave F."/>
            <person name="Robert C."/>
            <person name="Brottier P."/>
            <person name="Wincker P."/>
            <person name="Cattolico L."/>
            <person name="Weissenbach J."/>
            <person name="Saurin W."/>
            <person name="Quetier F."/>
            <person name="Schaefer M."/>
            <person name="Mueller-Auer S."/>
            <person name="Gabel C."/>
            <person name="Fuchs M."/>
            <person name="Benes V."/>
            <person name="Wurmbach E."/>
            <person name="Drzonek H."/>
            <person name="Erfle H."/>
            <person name="Jordan N."/>
            <person name="Bangert S."/>
            <person name="Wiedelmann R."/>
            <person name="Kranz H."/>
            <person name="Voss H."/>
            <person name="Holland R."/>
            <person name="Brandt P."/>
            <person name="Nyakatura G."/>
            <person name="Vezzi A."/>
            <person name="D'Angelo M."/>
            <person name="Pallavicini A."/>
            <person name="Toppo S."/>
            <person name="Simionati B."/>
            <person name="Conrad A."/>
            <person name="Hornischer K."/>
            <person name="Kauer G."/>
            <person name="Loehnert T.-H."/>
            <person name="Nordsiek G."/>
            <person name="Reichelt J."/>
            <person name="Scharfe M."/>
            <person name="Schoen O."/>
            <person name="Bargues M."/>
            <person name="Terol J."/>
            <person name="Climent J."/>
            <person name="Navarro P."/>
            <person name="Collado C."/>
            <person name="Perez-Perez A."/>
            <person name="Ottenwaelder B."/>
            <person name="Duchemin D."/>
            <person name="Cooke R."/>
            <person name="Laudie M."/>
            <person name="Berger-Llauro C."/>
            <person name="Purnelle B."/>
            <person name="Masuy D."/>
            <person name="de Haan M."/>
            <person name="Maarse A.C."/>
            <person name="Alcaraz J.-P."/>
            <person name="Cottet A."/>
            <person name="Casacuberta E."/>
            <person name="Monfort A."/>
            <person name="Argiriou A."/>
            <person name="Flores M."/>
            <person name="Liguori R."/>
            <person name="Vitale D."/>
            <person name="Mannhaupt G."/>
            <person name="Haase D."/>
            <person name="Schoof H."/>
            <person name="Rudd S."/>
            <person name="Zaccaria P."/>
            <person name="Mewes H.-W."/>
            <person name="Mayer K.F.X."/>
            <person name="Kaul S."/>
            <person name="Town C.D."/>
            <person name="Koo H.L."/>
            <person name="Tallon L.J."/>
            <person name="Jenkins J."/>
            <person name="Rooney T."/>
            <person name="Rizzo M."/>
            <person name="Walts A."/>
            <person name="Utterback T."/>
            <person name="Fujii C.Y."/>
            <person name="Shea T.P."/>
            <person name="Creasy T.H."/>
            <person name="Haas B."/>
            <person name="Maiti R."/>
            <person name="Wu D."/>
            <person name="Peterson J."/>
            <person name="Van Aken S."/>
            <person name="Pai G."/>
            <person name="Militscher J."/>
            <person name="Sellers P."/>
            <person name="Gill J.E."/>
            <person name="Feldblyum T.V."/>
            <person name="Preuss D."/>
            <person name="Lin X."/>
            <person name="Nierman W.C."/>
            <person name="Salzberg S.L."/>
            <person name="White O."/>
            <person name="Venter J.C."/>
            <person name="Fraser C.M."/>
            <person name="Kaneko T."/>
            <person name="Nakamura Y."/>
            <person name="Sato S."/>
            <person name="Kato T."/>
            <person name="Asamizu E."/>
            <person name="Sasamoto S."/>
            <person name="Kimura T."/>
            <person name="Idesawa K."/>
            <person name="Kawashima K."/>
            <person name="Kishida Y."/>
            <person name="Kiyokawa C."/>
            <person name="Kohara M."/>
            <person name="Matsumoto M."/>
            <person name="Matsuno A."/>
            <person name="Muraki A."/>
            <person name="Nakayama S."/>
            <person name="Nakazaki N."/>
            <person name="Shinpo S."/>
            <person name="Takeuchi C."/>
            <person name="Wada T."/>
            <person name="Watanabe A."/>
            <person name="Yamada M."/>
            <person name="Yasuda M."/>
            <person name="Tabata S."/>
        </authorList>
    </citation>
    <scope>NUCLEOTIDE SEQUENCE [LARGE SCALE GENOMIC DNA]</scope>
    <source>
        <strain>cv. Columbia</strain>
    </source>
</reference>
<reference key="2">
    <citation type="journal article" date="2017" name="Plant J.">
        <title>Araport11: a complete reannotation of the Arabidopsis thaliana reference genome.</title>
        <authorList>
            <person name="Cheng C.Y."/>
            <person name="Krishnakumar V."/>
            <person name="Chan A.P."/>
            <person name="Thibaud-Nissen F."/>
            <person name="Schobel S."/>
            <person name="Town C.D."/>
        </authorList>
    </citation>
    <scope>GENOME REANNOTATION</scope>
    <source>
        <strain>cv. Columbia</strain>
    </source>
</reference>
<reference key="3">
    <citation type="journal article" date="2003" name="Science">
        <title>Empirical analysis of transcriptional activity in the Arabidopsis genome.</title>
        <authorList>
            <person name="Yamada K."/>
            <person name="Lim J."/>
            <person name="Dale J.M."/>
            <person name="Chen H."/>
            <person name="Shinn P."/>
            <person name="Palm C.J."/>
            <person name="Southwick A.M."/>
            <person name="Wu H.C."/>
            <person name="Kim C.J."/>
            <person name="Nguyen M."/>
            <person name="Pham P.K."/>
            <person name="Cheuk R.F."/>
            <person name="Karlin-Newmann G."/>
            <person name="Liu S.X."/>
            <person name="Lam B."/>
            <person name="Sakano H."/>
            <person name="Wu T."/>
            <person name="Yu G."/>
            <person name="Miranda M."/>
            <person name="Quach H.L."/>
            <person name="Tripp M."/>
            <person name="Chang C.H."/>
            <person name="Lee J.M."/>
            <person name="Toriumi M.J."/>
            <person name="Chan M.M."/>
            <person name="Tang C.C."/>
            <person name="Onodera C.S."/>
            <person name="Deng J.M."/>
            <person name="Akiyama K."/>
            <person name="Ansari Y."/>
            <person name="Arakawa T."/>
            <person name="Banh J."/>
            <person name="Banno F."/>
            <person name="Bowser L."/>
            <person name="Brooks S.Y."/>
            <person name="Carninci P."/>
            <person name="Chao Q."/>
            <person name="Choy N."/>
            <person name="Enju A."/>
            <person name="Goldsmith A.D."/>
            <person name="Gurjal M."/>
            <person name="Hansen N.F."/>
            <person name="Hayashizaki Y."/>
            <person name="Johnson-Hopson C."/>
            <person name="Hsuan V.W."/>
            <person name="Iida K."/>
            <person name="Karnes M."/>
            <person name="Khan S."/>
            <person name="Koesema E."/>
            <person name="Ishida J."/>
            <person name="Jiang P.X."/>
            <person name="Jones T."/>
            <person name="Kawai J."/>
            <person name="Kamiya A."/>
            <person name="Meyers C."/>
            <person name="Nakajima M."/>
            <person name="Narusaka M."/>
            <person name="Seki M."/>
            <person name="Sakurai T."/>
            <person name="Satou M."/>
            <person name="Tamse R."/>
            <person name="Vaysberg M."/>
            <person name="Wallender E.K."/>
            <person name="Wong C."/>
            <person name="Yamamura Y."/>
            <person name="Yuan S."/>
            <person name="Shinozaki K."/>
            <person name="Davis R.W."/>
            <person name="Theologis A."/>
            <person name="Ecker J.R."/>
        </authorList>
    </citation>
    <scope>NUCLEOTIDE SEQUENCE [LARGE SCALE MRNA]</scope>
    <source>
        <strain>cv. Columbia</strain>
    </source>
</reference>
<reference key="4">
    <citation type="submission" date="2006-07" db="EMBL/GenBank/DDBJ databases">
        <title>Large-scale analysis of RIKEN Arabidopsis full-length (RAFL) cDNAs.</title>
        <authorList>
            <person name="Totoki Y."/>
            <person name="Seki M."/>
            <person name="Ishida J."/>
            <person name="Nakajima M."/>
            <person name="Enju A."/>
            <person name="Kamiya A."/>
            <person name="Narusaka M."/>
            <person name="Shin-i T."/>
            <person name="Nakagawa M."/>
            <person name="Sakamoto N."/>
            <person name="Oishi K."/>
            <person name="Kohara Y."/>
            <person name="Kobayashi M."/>
            <person name="Toyoda A."/>
            <person name="Sakaki Y."/>
            <person name="Sakurai T."/>
            <person name="Iida K."/>
            <person name="Akiyama K."/>
            <person name="Satou M."/>
            <person name="Toyoda T."/>
            <person name="Konagaya A."/>
            <person name="Carninci P."/>
            <person name="Kawai J."/>
            <person name="Hayashizaki Y."/>
            <person name="Shinozaki K."/>
        </authorList>
    </citation>
    <scope>NUCLEOTIDE SEQUENCE [LARGE SCALE MRNA]</scope>
    <source>
        <strain>cv. Columbia</strain>
    </source>
</reference>
<reference key="5">
    <citation type="journal article" date="2006" name="BMC Evol. Biol.">
        <title>The monosaccharide transporter gene family in land plants is ancient and shows differential subfamily expression and expansion across lineages.</title>
        <authorList>
            <person name="Johnson D.A."/>
            <person name="Hill J.P."/>
            <person name="Thomas M.A."/>
        </authorList>
    </citation>
    <scope>GENE FAMILY</scope>
</reference>
<comment type="function">
    <text evidence="3">Sugar transporter.</text>
</comment>
<comment type="subcellular location">
    <subcellularLocation>
        <location evidence="1">Membrane</location>
        <topology evidence="1">Multi-pass membrane protein</topology>
    </subcellularLocation>
</comment>
<comment type="similarity">
    <text evidence="3">Belongs to the major facilitator superfamily. Sugar transporter (TC 2.A.1.1) family.</text>
</comment>
<comment type="caution">
    <text evidence="3">This ERD6-like sugar transporter is shorter than other family members and contains only 8 transmembrane domains. It may not be functional.</text>
</comment>
<dbReference type="EMBL" id="AC009177">
    <property type="status" value="NOT_ANNOTATED_CDS"/>
    <property type="molecule type" value="Genomic_DNA"/>
</dbReference>
<dbReference type="EMBL" id="CP002686">
    <property type="protein sequence ID" value="ANM64579.1"/>
    <property type="molecule type" value="Genomic_DNA"/>
</dbReference>
<dbReference type="EMBL" id="BT010201">
    <property type="protein sequence ID" value="AAQ22670.1"/>
    <property type="molecule type" value="mRNA"/>
</dbReference>
<dbReference type="EMBL" id="AK227618">
    <property type="protein sequence ID" value="BAE99609.1"/>
    <property type="molecule type" value="mRNA"/>
</dbReference>
<dbReference type="RefSeq" id="NP_683530.2">
    <property type="nucleotide sequence ID" value="NM_148688.2"/>
</dbReference>
<dbReference type="SMR" id="Q7XA64"/>
<dbReference type="FunCoup" id="Q7XA64">
    <property type="interactions" value="85"/>
</dbReference>
<dbReference type="STRING" id="3702.Q7XA64"/>
<dbReference type="PaxDb" id="3702-AT3G05155.1"/>
<dbReference type="ProteomicsDB" id="220673"/>
<dbReference type="EnsemblPlants" id="AT3G05155.2">
    <property type="protein sequence ID" value="AT3G05155.2"/>
    <property type="gene ID" value="AT3G05155"/>
</dbReference>
<dbReference type="GeneID" id="819678"/>
<dbReference type="Gramene" id="AT3G05155.2">
    <property type="protein sequence ID" value="AT3G05155.2"/>
    <property type="gene ID" value="AT3G05155"/>
</dbReference>
<dbReference type="KEGG" id="ath:AT3G05155"/>
<dbReference type="Araport" id="AT3G05155"/>
<dbReference type="TAIR" id="AT3G05155"/>
<dbReference type="eggNOG" id="KOG0254">
    <property type="taxonomic scope" value="Eukaryota"/>
</dbReference>
<dbReference type="HOGENOM" id="CLU_001265_30_5_1"/>
<dbReference type="InParanoid" id="Q7XA64"/>
<dbReference type="PhylomeDB" id="Q7XA64"/>
<dbReference type="PRO" id="PR:Q7XA64"/>
<dbReference type="Proteomes" id="UP000006548">
    <property type="component" value="Chromosome 3"/>
</dbReference>
<dbReference type="ExpressionAtlas" id="Q7XA64">
    <property type="expression patterns" value="baseline and differential"/>
</dbReference>
<dbReference type="GO" id="GO:0016020">
    <property type="term" value="C:membrane"/>
    <property type="evidence" value="ECO:0007669"/>
    <property type="project" value="UniProtKB-SubCell"/>
</dbReference>
<dbReference type="GO" id="GO:0022857">
    <property type="term" value="F:transmembrane transporter activity"/>
    <property type="evidence" value="ECO:0007669"/>
    <property type="project" value="InterPro"/>
</dbReference>
<dbReference type="Gene3D" id="1.20.1250.20">
    <property type="entry name" value="MFS general substrate transporter like domains"/>
    <property type="match status" value="1"/>
</dbReference>
<dbReference type="InterPro" id="IPR020846">
    <property type="entry name" value="MFS_dom"/>
</dbReference>
<dbReference type="InterPro" id="IPR005828">
    <property type="entry name" value="MFS_sugar_transport-like"/>
</dbReference>
<dbReference type="InterPro" id="IPR036259">
    <property type="entry name" value="MFS_trans_sf"/>
</dbReference>
<dbReference type="InterPro" id="IPR050549">
    <property type="entry name" value="MFS_Trehalose_Transporter"/>
</dbReference>
<dbReference type="InterPro" id="IPR003663">
    <property type="entry name" value="Sugar/inositol_transpt"/>
</dbReference>
<dbReference type="InterPro" id="IPR005829">
    <property type="entry name" value="Sugar_transporter_CS"/>
</dbReference>
<dbReference type="PANTHER" id="PTHR48021">
    <property type="match status" value="1"/>
</dbReference>
<dbReference type="PANTHER" id="PTHR48021:SF35">
    <property type="entry name" value="SUGAR TRANSPORTER ERD6-LIKE 9"/>
    <property type="match status" value="1"/>
</dbReference>
<dbReference type="Pfam" id="PF00083">
    <property type="entry name" value="Sugar_tr"/>
    <property type="match status" value="1"/>
</dbReference>
<dbReference type="PRINTS" id="PR00171">
    <property type="entry name" value="SUGRTRNSPORT"/>
</dbReference>
<dbReference type="SUPFAM" id="SSF103473">
    <property type="entry name" value="MFS general substrate transporter"/>
    <property type="match status" value="1"/>
</dbReference>
<dbReference type="PROSITE" id="PS50850">
    <property type="entry name" value="MFS"/>
    <property type="match status" value="1"/>
</dbReference>
<dbReference type="PROSITE" id="PS00217">
    <property type="entry name" value="SUGAR_TRANSPORT_2"/>
    <property type="match status" value="1"/>
</dbReference>
<protein>
    <recommendedName>
        <fullName>Sugar transporter ERD6-like 9</fullName>
    </recommendedName>
</protein>
<keyword id="KW-0472">Membrane</keyword>
<keyword id="KW-1185">Reference proteome</keyword>
<keyword id="KW-0762">Sugar transport</keyword>
<keyword id="KW-0812">Transmembrane</keyword>
<keyword id="KW-1133">Transmembrane helix</keyword>
<keyword id="KW-0813">Transport</keyword>